<evidence type="ECO:0000250" key="1">
    <source>
        <dbReference type="UniProtKB" id="P11498"/>
    </source>
</evidence>
<evidence type="ECO:0000250" key="2">
    <source>
        <dbReference type="UniProtKB" id="Q9KWU4"/>
    </source>
</evidence>
<evidence type="ECO:0000255" key="3">
    <source>
        <dbReference type="PROSITE-ProRule" id="PRU00409"/>
    </source>
</evidence>
<evidence type="ECO:0000255" key="4">
    <source>
        <dbReference type="PROSITE-ProRule" id="PRU00969"/>
    </source>
</evidence>
<evidence type="ECO:0000255" key="5">
    <source>
        <dbReference type="PROSITE-ProRule" id="PRU01066"/>
    </source>
</evidence>
<evidence type="ECO:0000255" key="6">
    <source>
        <dbReference type="PROSITE-ProRule" id="PRU01151"/>
    </source>
</evidence>
<evidence type="ECO:0000269" key="7">
    <source>
    </source>
</evidence>
<evidence type="ECO:0000269" key="8">
    <source>
    </source>
</evidence>
<evidence type="ECO:0000269" key="9">
    <source>
    </source>
</evidence>
<evidence type="ECO:0007744" key="10">
    <source>
        <dbReference type="PDB" id="3BG5"/>
    </source>
</evidence>
<evidence type="ECO:0007744" key="11">
    <source>
        <dbReference type="PDB" id="3HB9"/>
    </source>
</evidence>
<evidence type="ECO:0007744" key="12">
    <source>
        <dbReference type="PDB" id="3HBL"/>
    </source>
</evidence>
<evidence type="ECO:0007744" key="13">
    <source>
        <dbReference type="PDB" id="3HO8"/>
    </source>
</evidence>
<evidence type="ECO:0007744" key="14">
    <source>
        <dbReference type="PDB" id="4HNT"/>
    </source>
</evidence>
<evidence type="ECO:0007744" key="15">
    <source>
        <dbReference type="PDB" id="4HNU"/>
    </source>
</evidence>
<evidence type="ECO:0007744" key="16">
    <source>
        <dbReference type="PDB" id="4HNV"/>
    </source>
</evidence>
<evidence type="ECO:0007829" key="17">
    <source>
        <dbReference type="PDB" id="3BG5"/>
    </source>
</evidence>
<evidence type="ECO:0007829" key="18">
    <source>
        <dbReference type="PDB" id="3HB9"/>
    </source>
</evidence>
<evidence type="ECO:0007829" key="19">
    <source>
        <dbReference type="PDB" id="3HBL"/>
    </source>
</evidence>
<evidence type="ECO:0007829" key="20">
    <source>
        <dbReference type="PDB" id="3HO8"/>
    </source>
</evidence>
<evidence type="ECO:0007829" key="21">
    <source>
        <dbReference type="PDB" id="4HNT"/>
    </source>
</evidence>
<evidence type="ECO:0007829" key="22">
    <source>
        <dbReference type="PDB" id="4HNV"/>
    </source>
</evidence>
<feature type="chain" id="PRO_0000447880" description="Pyruvate carboxylase">
    <location>
        <begin position="1"/>
        <end position="1150"/>
    </location>
</feature>
<feature type="domain" description="Biotin carboxylation" evidence="4">
    <location>
        <begin position="3"/>
        <end position="455"/>
    </location>
</feature>
<feature type="domain" description="ATP-grasp" evidence="3">
    <location>
        <begin position="123"/>
        <end position="319"/>
    </location>
</feature>
<feature type="domain" description="Pyruvate carboxyltransferase" evidence="6">
    <location>
        <begin position="533"/>
        <end position="802"/>
    </location>
</feature>
<feature type="domain" description="Biotinyl-binding" evidence="5">
    <location>
        <begin position="1071"/>
        <end position="1146"/>
    </location>
</feature>
<feature type="active site" evidence="2">
    <location>
        <position position="294"/>
    </location>
</feature>
<feature type="binding site" evidence="8 9 10 14">
    <location>
        <position position="119"/>
    </location>
    <ligand>
        <name>ATP</name>
        <dbReference type="ChEBI" id="CHEBI:30616"/>
    </ligand>
</feature>
<feature type="binding site" evidence="8 10">
    <location>
        <position position="161"/>
    </location>
    <ligand>
        <name>ATP</name>
        <dbReference type="ChEBI" id="CHEBI:30616"/>
    </ligand>
</feature>
<feature type="binding site" evidence="8 9 10 14 16">
    <location>
        <position position="211"/>
    </location>
    <ligand>
        <name>ATP</name>
        <dbReference type="ChEBI" id="CHEBI:30616"/>
    </ligand>
</feature>
<feature type="binding site" evidence="8 9 10 14 16">
    <location>
        <position position="278"/>
    </location>
    <ligand>
        <name>ATP</name>
        <dbReference type="ChEBI" id="CHEBI:30616"/>
    </ligand>
</feature>
<feature type="binding site" evidence="8 10">
    <location>
        <begin position="541"/>
        <end position="545"/>
    </location>
    <ligand>
        <name>substrate</name>
    </ligand>
</feature>
<feature type="binding site" evidence="8 9 11 12 14">
    <location>
        <position position="542"/>
    </location>
    <ligand>
        <name>Mn(2+)</name>
        <dbReference type="ChEBI" id="CHEBI:29035"/>
    </ligand>
</feature>
<feature type="binding site" evidence="8 9 11 12 16">
    <location>
        <position position="712"/>
    </location>
    <ligand>
        <name>Mn(2+)</name>
        <dbReference type="ChEBI" id="CHEBI:29035"/>
    </ligand>
</feature>
<feature type="binding site" evidence="8 9 11 12 14">
    <location>
        <position position="741"/>
    </location>
    <ligand>
        <name>Mn(2+)</name>
        <dbReference type="ChEBI" id="CHEBI:29035"/>
    </ligand>
</feature>
<feature type="binding site" evidence="8 9 11 12 14">
    <location>
        <position position="743"/>
    </location>
    <ligand>
        <name>Mn(2+)</name>
        <dbReference type="ChEBI" id="CHEBI:29035"/>
    </ligand>
</feature>
<feature type="modified residue" description="N6-carboxylysine" evidence="1">
    <location>
        <position position="712"/>
    </location>
</feature>
<feature type="modified residue" description="N6-biotinyllysine" evidence="5">
    <location>
        <position position="1112"/>
    </location>
</feature>
<feature type="mutagenesis site" description="Complete loss of catalytic activity." evidence="9">
    <original>R</original>
    <variation>A</variation>
    <location>
        <position position="21"/>
    </location>
</feature>
<feature type="mutagenesis site" description="Complete loss of catalytic activity." evidence="9">
    <original>K</original>
    <variation>A</variation>
    <location>
        <position position="411"/>
    </location>
</feature>
<feature type="mutagenesis site" description="Complete loss of catalytic activity." evidence="8">
    <original>A</original>
    <variation>T</variation>
    <location>
        <position position="580"/>
    </location>
</feature>
<feature type="mutagenesis site" description="Complete loss of catalytic activity." evidence="8">
    <original>R</original>
    <variation>A</variation>
    <location>
        <position position="614"/>
    </location>
</feature>
<feature type="mutagenesis site" description="Complete loss of catalytic activity." evidence="8">
    <original>Y</original>
    <variation>A</variation>
    <location>
        <position position="621"/>
    </location>
</feature>
<feature type="mutagenesis site" description="About 2.5-fold loss of catalytic activity." evidence="8">
    <original>Q</original>
    <variation>A</variation>
    <location>
        <position position="838"/>
    </location>
</feature>
<feature type="mutagenesis site" description="Complete loss of catalytic activity." evidence="8">
    <original>T</original>
    <variation>A</variation>
    <location>
        <position position="876"/>
    </location>
</feature>
<feature type="mutagenesis site" description="About 2-fold loss of catalytic activity." evidence="8">
    <original>S</original>
    <variation>A</variation>
    <location>
        <position position="879"/>
    </location>
</feature>
<feature type="mutagenesis site" description="Complete loss of catalytic activity." evidence="8">
    <original>K</original>
    <variation>T</variation>
    <location>
        <position position="880"/>
    </location>
</feature>
<feature type="strand" evidence="19">
    <location>
        <begin position="6"/>
        <end position="9"/>
    </location>
</feature>
<feature type="helix" evidence="19">
    <location>
        <begin position="13"/>
        <end position="25"/>
    </location>
</feature>
<feature type="strand" evidence="19">
    <location>
        <begin position="29"/>
        <end position="34"/>
    </location>
</feature>
<feature type="helix" evidence="19">
    <location>
        <begin position="36"/>
        <end position="38"/>
    </location>
</feature>
<feature type="helix" evidence="19">
    <location>
        <begin position="42"/>
        <end position="45"/>
    </location>
</feature>
<feature type="strand" evidence="19">
    <location>
        <begin position="47"/>
        <end position="52"/>
    </location>
</feature>
<feature type="strand" evidence="22">
    <location>
        <begin position="55"/>
        <end position="57"/>
    </location>
</feature>
<feature type="helix" evidence="19">
    <location>
        <begin position="61"/>
        <end position="63"/>
    </location>
</feature>
<feature type="helix" evidence="19">
    <location>
        <begin position="66"/>
        <end position="75"/>
    </location>
</feature>
<feature type="strand" evidence="19">
    <location>
        <begin position="79"/>
        <end position="82"/>
    </location>
</feature>
<feature type="turn" evidence="19">
    <location>
        <begin position="84"/>
        <end position="87"/>
    </location>
</feature>
<feature type="helix" evidence="19">
    <location>
        <begin position="92"/>
        <end position="100"/>
    </location>
</feature>
<feature type="strand" evidence="19">
    <location>
        <begin position="104"/>
        <end position="108"/>
    </location>
</feature>
<feature type="helix" evidence="19">
    <location>
        <begin position="110"/>
        <end position="117"/>
    </location>
</feature>
<feature type="helix" evidence="19">
    <location>
        <begin position="119"/>
        <end position="128"/>
    </location>
</feature>
<feature type="strand" evidence="19">
    <location>
        <begin position="143"/>
        <end position="145"/>
    </location>
</feature>
<feature type="turn" evidence="19">
    <location>
        <begin position="146"/>
        <end position="150"/>
    </location>
</feature>
<feature type="helix" evidence="19">
    <location>
        <begin position="151"/>
        <end position="153"/>
    </location>
</feature>
<feature type="strand" evidence="19">
    <location>
        <begin position="156"/>
        <end position="161"/>
    </location>
</feature>
<feature type="strand" evidence="19">
    <location>
        <begin position="166"/>
        <end position="168"/>
    </location>
</feature>
<feature type="strand" evidence="19">
    <location>
        <begin position="177"/>
        <end position="179"/>
    </location>
</feature>
<feature type="helix" evidence="19">
    <location>
        <begin position="182"/>
        <end position="185"/>
    </location>
</feature>
<feature type="strand" evidence="19">
    <location>
        <begin position="186"/>
        <end position="190"/>
    </location>
</feature>
<feature type="strand" evidence="21">
    <location>
        <begin position="193"/>
        <end position="196"/>
    </location>
</feature>
<feature type="strand" evidence="19">
    <location>
        <begin position="200"/>
        <end position="203"/>
    </location>
</feature>
<feature type="strand" evidence="19">
    <location>
        <begin position="210"/>
        <end position="218"/>
    </location>
</feature>
<feature type="strand" evidence="19">
    <location>
        <begin position="220"/>
        <end position="222"/>
    </location>
</feature>
<feature type="strand" evidence="19">
    <location>
        <begin position="224"/>
        <end position="238"/>
    </location>
</feature>
<feature type="strand" evidence="19">
    <location>
        <begin position="240"/>
        <end position="246"/>
    </location>
</feature>
<feature type="strand" evidence="21">
    <location>
        <begin position="248"/>
        <end position="250"/>
    </location>
</feature>
<feature type="helix" evidence="19">
    <location>
        <begin position="252"/>
        <end position="268"/>
    </location>
</feature>
<feature type="strand" evidence="19">
    <location>
        <begin position="273"/>
        <end position="282"/>
    </location>
</feature>
<feature type="strand" evidence="19">
    <location>
        <begin position="285"/>
        <end position="292"/>
    </location>
</feature>
<feature type="helix" evidence="19">
    <location>
        <begin position="299"/>
        <end position="306"/>
    </location>
</feature>
<feature type="helix" evidence="19">
    <location>
        <begin position="310"/>
        <end position="318"/>
    </location>
</feature>
<feature type="turn" evidence="19">
    <location>
        <begin position="326"/>
        <end position="328"/>
    </location>
</feature>
<feature type="helix" evidence="19">
    <location>
        <begin position="333"/>
        <end position="335"/>
    </location>
</feature>
<feature type="strand" evidence="19">
    <location>
        <begin position="340"/>
        <end position="347"/>
    </location>
</feature>
<feature type="helix" evidence="19">
    <location>
        <begin position="352"/>
        <end position="354"/>
    </location>
</feature>
<feature type="strand" evidence="19">
    <location>
        <begin position="365"/>
        <end position="367"/>
    </location>
</feature>
<feature type="strand" evidence="19">
    <location>
        <begin position="374"/>
        <end position="380"/>
    </location>
</feature>
<feature type="strand" evidence="19">
    <location>
        <begin position="382"/>
        <end position="384"/>
    </location>
</feature>
<feature type="strand" evidence="21">
    <location>
        <begin position="389"/>
        <end position="391"/>
    </location>
</feature>
<feature type="strand" evidence="19">
    <location>
        <begin position="395"/>
        <end position="404"/>
    </location>
</feature>
<feature type="helix" evidence="19">
    <location>
        <begin position="405"/>
        <end position="418"/>
    </location>
</feature>
<feature type="strand" evidence="19">
    <location>
        <begin position="420"/>
        <end position="424"/>
    </location>
</feature>
<feature type="helix" evidence="19">
    <location>
        <begin position="428"/>
        <end position="436"/>
    </location>
</feature>
<feature type="helix" evidence="19">
    <location>
        <begin position="438"/>
        <end position="442"/>
    </location>
</feature>
<feature type="helix" evidence="19">
    <location>
        <begin position="449"/>
        <end position="452"/>
    </location>
</feature>
<feature type="helix" evidence="19">
    <location>
        <begin position="454"/>
        <end position="457"/>
    </location>
</feature>
<feature type="helix" evidence="19">
    <location>
        <begin position="465"/>
        <end position="479"/>
    </location>
</feature>
<feature type="helix" evidence="19">
    <location>
        <begin position="502"/>
        <end position="506"/>
    </location>
</feature>
<feature type="helix" evidence="19">
    <location>
        <begin position="511"/>
        <end position="527"/>
    </location>
</feature>
<feature type="strand" evidence="19">
    <location>
        <begin position="531"/>
        <end position="537"/>
    </location>
</feature>
<feature type="turn" evidence="19">
    <location>
        <begin position="539"/>
        <end position="541"/>
    </location>
</feature>
<feature type="helix" evidence="19">
    <location>
        <begin position="542"/>
        <end position="547"/>
    </location>
</feature>
<feature type="helix" evidence="19">
    <location>
        <begin position="554"/>
        <end position="567"/>
    </location>
</feature>
<feature type="turn" evidence="19">
    <location>
        <begin position="568"/>
        <end position="570"/>
    </location>
</feature>
<feature type="strand" evidence="19">
    <location>
        <begin position="572"/>
        <end position="578"/>
    </location>
</feature>
<feature type="helix" evidence="19">
    <location>
        <begin position="581"/>
        <end position="587"/>
    </location>
</feature>
<feature type="helix" evidence="19">
    <location>
        <begin position="593"/>
        <end position="603"/>
    </location>
</feature>
<feature type="strand" evidence="19">
    <location>
        <begin position="606"/>
        <end position="614"/>
    </location>
</feature>
<feature type="turn" evidence="19">
    <location>
        <begin position="615"/>
        <end position="617"/>
    </location>
</feature>
<feature type="strand" evidence="22">
    <location>
        <begin position="620"/>
        <end position="622"/>
    </location>
</feature>
<feature type="helix" evidence="19">
    <location>
        <begin position="626"/>
        <end position="638"/>
    </location>
</feature>
<feature type="strand" evidence="19">
    <location>
        <begin position="643"/>
        <end position="647"/>
    </location>
</feature>
<feature type="helix" evidence="19">
    <location>
        <begin position="653"/>
        <end position="656"/>
    </location>
</feature>
<feature type="helix" evidence="19">
    <location>
        <begin position="657"/>
        <end position="665"/>
    </location>
</feature>
<feature type="strand" evidence="19">
    <location>
        <begin position="669"/>
        <end position="675"/>
    </location>
</feature>
<feature type="strand" evidence="20">
    <location>
        <begin position="680"/>
        <end position="682"/>
    </location>
</feature>
<feature type="turn" evidence="17">
    <location>
        <begin position="683"/>
        <end position="685"/>
    </location>
</feature>
<feature type="strand" evidence="19">
    <location>
        <begin position="687"/>
        <end position="690"/>
    </location>
</feature>
<feature type="helix" evidence="19">
    <location>
        <begin position="691"/>
        <end position="703"/>
    </location>
</feature>
<feature type="strand" evidence="19">
    <location>
        <begin position="707"/>
        <end position="713"/>
    </location>
</feature>
<feature type="helix" evidence="19">
    <location>
        <begin position="720"/>
        <end position="733"/>
    </location>
</feature>
<feature type="strand" evidence="19">
    <location>
        <begin position="738"/>
        <end position="742"/>
    </location>
</feature>
<feature type="strand" evidence="18">
    <location>
        <begin position="744"/>
        <end position="747"/>
    </location>
</feature>
<feature type="helix" evidence="19">
    <location>
        <begin position="749"/>
        <end position="758"/>
    </location>
</feature>
<feature type="strand" evidence="19">
    <location>
        <begin position="762"/>
        <end position="767"/>
    </location>
</feature>
<feature type="helix" evidence="19">
    <location>
        <begin position="769"/>
        <end position="771"/>
    </location>
</feature>
<feature type="helix" evidence="19">
    <location>
        <begin position="780"/>
        <end position="786"/>
    </location>
</feature>
<feature type="turn" evidence="19">
    <location>
        <begin position="787"/>
        <end position="789"/>
    </location>
</feature>
<feature type="strand" evidence="20">
    <location>
        <begin position="790"/>
        <end position="792"/>
    </location>
</feature>
<feature type="helix" evidence="19">
    <location>
        <begin position="798"/>
        <end position="812"/>
    </location>
</feature>
<feature type="helix" evidence="19">
    <location>
        <begin position="813"/>
        <end position="818"/>
    </location>
</feature>
<feature type="helix" evidence="19">
    <location>
        <begin position="829"/>
        <end position="832"/>
    </location>
</feature>
<feature type="helix" evidence="19">
    <location>
        <begin position="838"/>
        <end position="848"/>
    </location>
</feature>
<feature type="helix" evidence="19">
    <location>
        <begin position="852"/>
        <end position="854"/>
    </location>
</feature>
<feature type="helix" evidence="19">
    <location>
        <begin position="855"/>
        <end position="868"/>
    </location>
</feature>
<feature type="helix" evidence="19">
    <location>
        <begin position="878"/>
        <end position="891"/>
    </location>
</feature>
<feature type="helix" evidence="19">
    <location>
        <begin position="898"/>
        <end position="901"/>
    </location>
</feature>
<feature type="helix" evidence="19">
    <location>
        <begin position="903"/>
        <end position="905"/>
    </location>
</feature>
<feature type="helix" evidence="19">
    <location>
        <begin position="910"/>
        <end position="915"/>
    </location>
</feature>
<feature type="turn" evidence="19">
    <location>
        <begin position="916"/>
        <end position="918"/>
    </location>
</feature>
<feature type="helix" evidence="19">
    <location>
        <begin position="929"/>
        <end position="936"/>
    </location>
</feature>
<feature type="helix" evidence="19">
    <location>
        <begin position="946"/>
        <end position="949"/>
    </location>
</feature>
<feature type="helix" evidence="19">
    <location>
        <begin position="955"/>
        <end position="965"/>
    </location>
</feature>
<feature type="strand" evidence="17">
    <location>
        <begin position="966"/>
        <end position="968"/>
    </location>
</feature>
<feature type="helix" evidence="19">
    <location>
        <begin position="972"/>
        <end position="980"/>
    </location>
</feature>
<feature type="helix" evidence="19">
    <location>
        <begin position="982"/>
        <end position="995"/>
    </location>
</feature>
<feature type="helix" evidence="19">
    <location>
        <begin position="998"/>
        <end position="1000"/>
    </location>
</feature>
<feature type="helix" evidence="19">
    <location>
        <begin position="1003"/>
        <end position="1008"/>
    </location>
</feature>
<feature type="strand" evidence="19">
    <location>
        <begin position="1015"/>
        <end position="1021"/>
    </location>
</feature>
<feature type="strand" evidence="19">
    <location>
        <begin position="1024"/>
        <end position="1033"/>
    </location>
</feature>
<feature type="strand" evidence="19">
    <location>
        <begin position="1040"/>
        <end position="1048"/>
    </location>
</feature>
<feature type="strand" evidence="19">
    <location>
        <begin position="1051"/>
        <end position="1058"/>
    </location>
</feature>
<feature type="strand" evidence="19">
    <location>
        <begin position="1062"/>
        <end position="1064"/>
    </location>
</feature>
<feature type="strand" evidence="19">
    <location>
        <begin position="1077"/>
        <end position="1081"/>
    </location>
</feature>
<feature type="strand" evidence="19">
    <location>
        <begin position="1083"/>
        <end position="1091"/>
    </location>
</feature>
<feature type="strand" evidence="19">
    <location>
        <begin position="1104"/>
        <end position="1112"/>
    </location>
</feature>
<feature type="strand" evidence="19">
    <location>
        <begin position="1114"/>
        <end position="1118"/>
    </location>
</feature>
<feature type="strand" evidence="19">
    <location>
        <begin position="1120"/>
        <end position="1128"/>
    </location>
</feature>
<feature type="strand" evidence="19">
    <location>
        <begin position="1140"/>
        <end position="1145"/>
    </location>
</feature>
<reference key="1">
    <citation type="journal article" date="2001" name="Lancet">
        <title>Whole genome sequencing of meticillin-resistant Staphylococcus aureus.</title>
        <authorList>
            <person name="Kuroda M."/>
            <person name="Ohta T."/>
            <person name="Uchiyama I."/>
            <person name="Baba T."/>
            <person name="Yuzawa H."/>
            <person name="Kobayashi I."/>
            <person name="Cui L."/>
            <person name="Oguchi A."/>
            <person name="Aoki K."/>
            <person name="Nagai Y."/>
            <person name="Lian J.-Q."/>
            <person name="Ito T."/>
            <person name="Kanamori M."/>
            <person name="Matsumaru H."/>
            <person name="Maruyama A."/>
            <person name="Murakami H."/>
            <person name="Hosoyama A."/>
            <person name="Mizutani-Ui Y."/>
            <person name="Takahashi N.K."/>
            <person name="Sawano T."/>
            <person name="Inoue R."/>
            <person name="Kaito C."/>
            <person name="Sekimizu K."/>
            <person name="Hirakawa H."/>
            <person name="Kuhara S."/>
            <person name="Goto S."/>
            <person name="Yabuzaki J."/>
            <person name="Kanehisa M."/>
            <person name="Yamashita A."/>
            <person name="Oshima K."/>
            <person name="Furuya K."/>
            <person name="Yoshino C."/>
            <person name="Shiba T."/>
            <person name="Hattori M."/>
            <person name="Ogasawara N."/>
            <person name="Hayashi H."/>
            <person name="Hiramatsu K."/>
        </authorList>
    </citation>
    <scope>NUCLEOTIDE SEQUENCE [LARGE SCALE GENOMIC DNA]</scope>
    <source>
        <strain>Mu50 / ATCC 700699</strain>
    </source>
</reference>
<reference evidence="10" key="2">
    <citation type="journal article" date="2008" name="Nat. Struct. Mol. Biol.">
        <title>Crystal structures of human and Staphylococcus aureus pyruvate carboxylase and molecular insights into the carboxyltransfer reaction.</title>
        <authorList>
            <person name="Xiang S."/>
            <person name="Tong L."/>
        </authorList>
    </citation>
    <scope>X-RAY CRYSTALLOGRAPHY (2.80 ANGSTROMS) IN COMPLEX WITH ATP AND PYRUVATE</scope>
    <scope>SUBUNIT</scope>
    <scope>CATALYTIC ACTIVITY</scope>
</reference>
<reference evidence="11 12 13" key="3">
    <citation type="journal article" date="2009" name="Structure">
        <title>A symmetrical tetramer for S. aureus pyruvate carboxylase in complex with coenzyme A.</title>
        <authorList>
            <person name="Yu L.P."/>
            <person name="Xiang S."/>
            <person name="Lasso G."/>
            <person name="Gil D."/>
            <person name="Valle M."/>
            <person name="Tong L."/>
        </authorList>
    </citation>
    <scope>X-RAY CRYSTALLOGRAPHY (2.71 ANGSTROMS) IN COMPLEX WITH MANGANESE</scope>
    <scope>SUBUNIT</scope>
    <scope>MUTAGENESIS OF ALA-580; ARG-614; TYR-621; GLN-838; THR-876; SER-879 AND LYS-880</scope>
    <scope>FUNCTION</scope>
    <scope>CATALYTIC ACTIVITY</scope>
    <scope>COFACTOR</scope>
</reference>
<reference evidence="14 15 16" key="4">
    <citation type="journal article" date="2013" name="Biochemistry">
        <title>Characterizing the importance of the biotin carboxylase domain dimer for Staphylococcus aureus pyruvate carboxylase catalysis.</title>
        <authorList>
            <person name="Yu L.P."/>
            <person name="Chou C.Y."/>
            <person name="Choi P.H."/>
            <person name="Tong L."/>
        </authorList>
    </citation>
    <scope>X-RAY CRYSTALLOGRAPHY (2.80 ANGSTROMS) IN COMPLEX WITH ATP AND MANGANESE</scope>
    <scope>MUTAGENESIS OF ARG-21 AND LYS-411</scope>
    <scope>SUBUNIT</scope>
    <scope>FUNCTION</scope>
    <scope>CATALYTIC ACTIVITY</scope>
    <scope>COFACTOR</scope>
</reference>
<proteinExistence type="evidence at protein level"/>
<organism>
    <name type="scientific">Staphylococcus aureus (strain Mu50 / ATCC 700699)</name>
    <dbReference type="NCBI Taxonomy" id="158878"/>
    <lineage>
        <taxon>Bacteria</taxon>
        <taxon>Bacillati</taxon>
        <taxon>Bacillota</taxon>
        <taxon>Bacilli</taxon>
        <taxon>Bacillales</taxon>
        <taxon>Staphylococcaceae</taxon>
        <taxon>Staphylococcus</taxon>
    </lineage>
</organism>
<protein>
    <recommendedName>
        <fullName>Pyruvate carboxylase</fullName>
        <ecNumber evidence="8 9">6.4.1.1</ecNumber>
    </recommendedName>
</protein>
<comment type="function">
    <text evidence="8 9">Catalyzes a 2-step reaction, involving the ATP-dependent carboxylation of the covalently attached biotin in the first step and the transfer of the carboxyl group to pyruvate in the second.</text>
</comment>
<comment type="catalytic activity">
    <reaction evidence="8 9">
        <text>hydrogencarbonate + pyruvate + ATP = oxaloacetate + ADP + phosphate + H(+)</text>
        <dbReference type="Rhea" id="RHEA:20844"/>
        <dbReference type="ChEBI" id="CHEBI:15361"/>
        <dbReference type="ChEBI" id="CHEBI:15378"/>
        <dbReference type="ChEBI" id="CHEBI:16452"/>
        <dbReference type="ChEBI" id="CHEBI:17544"/>
        <dbReference type="ChEBI" id="CHEBI:30616"/>
        <dbReference type="ChEBI" id="CHEBI:43474"/>
        <dbReference type="ChEBI" id="CHEBI:456216"/>
        <dbReference type="EC" id="6.4.1.1"/>
    </reaction>
</comment>
<comment type="cofactor">
    <cofactor evidence="8 9">
        <name>biotin</name>
        <dbReference type="ChEBI" id="CHEBI:57586"/>
    </cofactor>
</comment>
<comment type="subunit">
    <text evidence="7 8 9">Homotetramer.</text>
</comment>
<comment type="interaction">
    <interactant intactId="EBI-16108775">
        <id>A0A0H3JRU9</id>
    </interactant>
    <interactant intactId="EBI-16108775">
        <id>A0A0H3JRU9</id>
        <label>pycA</label>
    </interactant>
    <organismsDiffer>false</organismsDiffer>
    <experiments>9</experiments>
</comment>
<dbReference type="EC" id="6.4.1.1" evidence="8 9"/>
<dbReference type="EMBL" id="BA000017">
    <property type="protein sequence ID" value="BAB57276.1"/>
    <property type="molecule type" value="Genomic_DNA"/>
</dbReference>
<dbReference type="RefSeq" id="WP_000809514.1">
    <property type="nucleotide sequence ID" value="NC_002758.2"/>
</dbReference>
<dbReference type="PDB" id="3BG5">
    <property type="method" value="X-ray"/>
    <property type="resolution" value="2.80 A"/>
    <property type="chains" value="A/B/C/D=1-1150"/>
</dbReference>
<dbReference type="PDB" id="3HB9">
    <property type="method" value="X-ray"/>
    <property type="resolution" value="2.90 A"/>
    <property type="chains" value="A/B/C/D=1-1150"/>
</dbReference>
<dbReference type="PDB" id="3HBL">
    <property type="method" value="X-ray"/>
    <property type="resolution" value="2.71 A"/>
    <property type="chains" value="A/B/C/D=1-1150"/>
</dbReference>
<dbReference type="PDB" id="3HO8">
    <property type="method" value="X-ray"/>
    <property type="resolution" value="2.90 A"/>
    <property type="chains" value="A/B/C/D=1-1150"/>
</dbReference>
<dbReference type="PDB" id="4HNT">
    <property type="method" value="X-ray"/>
    <property type="resolution" value="2.80 A"/>
    <property type="chains" value="A/B/C/D=1-1150"/>
</dbReference>
<dbReference type="PDB" id="4HNU">
    <property type="method" value="X-ray"/>
    <property type="resolution" value="3.00 A"/>
    <property type="chains" value="A/B/C/D=1-1150"/>
</dbReference>
<dbReference type="PDB" id="4HNV">
    <property type="method" value="X-ray"/>
    <property type="resolution" value="2.80 A"/>
    <property type="chains" value="A/B/C/D=1-1150"/>
</dbReference>
<dbReference type="PDBsum" id="3BG5"/>
<dbReference type="PDBsum" id="3HB9"/>
<dbReference type="PDBsum" id="3HBL"/>
<dbReference type="PDBsum" id="3HO8"/>
<dbReference type="PDBsum" id="4HNT"/>
<dbReference type="PDBsum" id="4HNU"/>
<dbReference type="PDBsum" id="4HNV"/>
<dbReference type="SMR" id="A0A0H3JRU9"/>
<dbReference type="DrugBank" id="DB07497">
    <property type="generic name" value="5-(hexahydro-2-oxo-1H-thieno[3,4-D]imidazol-6-yl)pentanal"/>
</dbReference>
<dbReference type="KEGG" id="sav:SAV1114"/>
<dbReference type="HOGENOM" id="CLU_000395_0_1_9"/>
<dbReference type="PhylomeDB" id="A0A0H3JRU9"/>
<dbReference type="BRENDA" id="6.4.1.1">
    <property type="organism ID" value="3352"/>
</dbReference>
<dbReference type="EvolutionaryTrace" id="A0A0H3JRU9"/>
<dbReference type="Proteomes" id="UP000002481">
    <property type="component" value="Chromosome"/>
</dbReference>
<dbReference type="GO" id="GO:0005737">
    <property type="term" value="C:cytoplasm"/>
    <property type="evidence" value="ECO:0007669"/>
    <property type="project" value="TreeGrafter"/>
</dbReference>
<dbReference type="GO" id="GO:0005524">
    <property type="term" value="F:ATP binding"/>
    <property type="evidence" value="ECO:0007669"/>
    <property type="project" value="UniProtKB-KW"/>
</dbReference>
<dbReference type="GO" id="GO:0042802">
    <property type="term" value="F:identical protein binding"/>
    <property type="evidence" value="ECO:0000353"/>
    <property type="project" value="IntAct"/>
</dbReference>
<dbReference type="GO" id="GO:0046872">
    <property type="term" value="F:metal ion binding"/>
    <property type="evidence" value="ECO:0007669"/>
    <property type="project" value="UniProtKB-KW"/>
</dbReference>
<dbReference type="GO" id="GO:0004736">
    <property type="term" value="F:pyruvate carboxylase activity"/>
    <property type="evidence" value="ECO:0007669"/>
    <property type="project" value="UniProtKB-EC"/>
</dbReference>
<dbReference type="GO" id="GO:0006094">
    <property type="term" value="P:gluconeogenesis"/>
    <property type="evidence" value="ECO:0007669"/>
    <property type="project" value="InterPro"/>
</dbReference>
<dbReference type="CDD" id="cd06850">
    <property type="entry name" value="biotinyl_domain"/>
    <property type="match status" value="1"/>
</dbReference>
<dbReference type="CDD" id="cd07937">
    <property type="entry name" value="DRE_TIM_PC_TC_5S"/>
    <property type="match status" value="1"/>
</dbReference>
<dbReference type="FunFam" id="2.40.50.100:FF:000003">
    <property type="entry name" value="Acetyl-CoA carboxylase biotin carboxyl carrier protein"/>
    <property type="match status" value="1"/>
</dbReference>
<dbReference type="FunFam" id="3.30.1490.20:FF:000018">
    <property type="entry name" value="Biotin carboxylase"/>
    <property type="match status" value="1"/>
</dbReference>
<dbReference type="FunFam" id="3.40.50.20:FF:000010">
    <property type="entry name" value="Propionyl-CoA carboxylase subunit alpha"/>
    <property type="match status" value="1"/>
</dbReference>
<dbReference type="FunFam" id="3.10.600.10:FF:000003">
    <property type="entry name" value="Pyruvate carboxylase"/>
    <property type="match status" value="1"/>
</dbReference>
<dbReference type="FunFam" id="3.20.20.70:FF:000033">
    <property type="entry name" value="Pyruvate carboxylase"/>
    <property type="match status" value="1"/>
</dbReference>
<dbReference type="FunFam" id="3.30.470.20:FF:000012">
    <property type="entry name" value="Pyruvate carboxylase"/>
    <property type="match status" value="1"/>
</dbReference>
<dbReference type="Gene3D" id="2.40.50.100">
    <property type="match status" value="1"/>
</dbReference>
<dbReference type="Gene3D" id="3.20.20.70">
    <property type="entry name" value="Aldolase class I"/>
    <property type="match status" value="1"/>
</dbReference>
<dbReference type="Gene3D" id="3.30.470.20">
    <property type="entry name" value="ATP-grasp fold, B domain"/>
    <property type="match status" value="1"/>
</dbReference>
<dbReference type="Gene3D" id="3.10.600.10">
    <property type="entry name" value="pyruvate carboxylase f1077a mutant domain"/>
    <property type="match status" value="1"/>
</dbReference>
<dbReference type="InterPro" id="IPR013785">
    <property type="entry name" value="Aldolase_TIM"/>
</dbReference>
<dbReference type="InterPro" id="IPR011761">
    <property type="entry name" value="ATP-grasp"/>
</dbReference>
<dbReference type="InterPro" id="IPR005481">
    <property type="entry name" value="BC-like_N"/>
</dbReference>
<dbReference type="InterPro" id="IPR011764">
    <property type="entry name" value="Biotin_carboxylation_dom"/>
</dbReference>
<dbReference type="InterPro" id="IPR005482">
    <property type="entry name" value="Biotin_COase_C"/>
</dbReference>
<dbReference type="InterPro" id="IPR000089">
    <property type="entry name" value="Biotin_lipoyl"/>
</dbReference>
<dbReference type="InterPro" id="IPR003379">
    <property type="entry name" value="Carboxylase_cons_dom"/>
</dbReference>
<dbReference type="InterPro" id="IPR005479">
    <property type="entry name" value="CbamoylP_synth_lsu-like_ATP-bd"/>
</dbReference>
<dbReference type="InterPro" id="IPR055268">
    <property type="entry name" value="PCB-like"/>
</dbReference>
<dbReference type="InterPro" id="IPR016185">
    <property type="entry name" value="PreATP-grasp_dom_sf"/>
</dbReference>
<dbReference type="InterPro" id="IPR000891">
    <property type="entry name" value="PYR_CT"/>
</dbReference>
<dbReference type="InterPro" id="IPR005930">
    <property type="entry name" value="Pyruv_COase"/>
</dbReference>
<dbReference type="InterPro" id="IPR011054">
    <property type="entry name" value="Rudment_hybrid_motif"/>
</dbReference>
<dbReference type="InterPro" id="IPR011053">
    <property type="entry name" value="Single_hybrid_motif"/>
</dbReference>
<dbReference type="NCBIfam" id="NF006761">
    <property type="entry name" value="PRK09282.1"/>
    <property type="match status" value="1"/>
</dbReference>
<dbReference type="NCBIfam" id="NF009554">
    <property type="entry name" value="PRK12999.1"/>
    <property type="match status" value="1"/>
</dbReference>
<dbReference type="NCBIfam" id="TIGR01235">
    <property type="entry name" value="pyruv_carbox"/>
    <property type="match status" value="1"/>
</dbReference>
<dbReference type="PANTHER" id="PTHR43778">
    <property type="entry name" value="PYRUVATE CARBOXYLASE"/>
    <property type="match status" value="1"/>
</dbReference>
<dbReference type="PANTHER" id="PTHR43778:SF2">
    <property type="entry name" value="PYRUVATE CARBOXYLASE, MITOCHONDRIAL"/>
    <property type="match status" value="1"/>
</dbReference>
<dbReference type="Pfam" id="PF02785">
    <property type="entry name" value="Biotin_carb_C"/>
    <property type="match status" value="1"/>
</dbReference>
<dbReference type="Pfam" id="PF00289">
    <property type="entry name" value="Biotin_carb_N"/>
    <property type="match status" value="1"/>
</dbReference>
<dbReference type="Pfam" id="PF00364">
    <property type="entry name" value="Biotin_lipoyl"/>
    <property type="match status" value="1"/>
</dbReference>
<dbReference type="Pfam" id="PF02786">
    <property type="entry name" value="CPSase_L_D2"/>
    <property type="match status" value="1"/>
</dbReference>
<dbReference type="Pfam" id="PF00682">
    <property type="entry name" value="HMGL-like"/>
    <property type="match status" value="1"/>
</dbReference>
<dbReference type="Pfam" id="PF02436">
    <property type="entry name" value="PYC_OADA"/>
    <property type="match status" value="1"/>
</dbReference>
<dbReference type="PIRSF" id="PIRSF001594">
    <property type="entry name" value="Pyruv_carbox"/>
    <property type="match status" value="1"/>
</dbReference>
<dbReference type="SMART" id="SM00878">
    <property type="entry name" value="Biotin_carb_C"/>
    <property type="match status" value="1"/>
</dbReference>
<dbReference type="SUPFAM" id="SSF51569">
    <property type="entry name" value="Aldolase"/>
    <property type="match status" value="1"/>
</dbReference>
<dbReference type="SUPFAM" id="SSF56059">
    <property type="entry name" value="Glutathione synthetase ATP-binding domain-like"/>
    <property type="match status" value="1"/>
</dbReference>
<dbReference type="SUPFAM" id="SSF89000">
    <property type="entry name" value="post-HMGL domain-like"/>
    <property type="match status" value="1"/>
</dbReference>
<dbReference type="SUPFAM" id="SSF52440">
    <property type="entry name" value="PreATP-grasp domain"/>
    <property type="match status" value="1"/>
</dbReference>
<dbReference type="SUPFAM" id="SSF51246">
    <property type="entry name" value="Rudiment single hybrid motif"/>
    <property type="match status" value="1"/>
</dbReference>
<dbReference type="SUPFAM" id="SSF51230">
    <property type="entry name" value="Single hybrid motif"/>
    <property type="match status" value="1"/>
</dbReference>
<dbReference type="PROSITE" id="PS50975">
    <property type="entry name" value="ATP_GRASP"/>
    <property type="match status" value="1"/>
</dbReference>
<dbReference type="PROSITE" id="PS50979">
    <property type="entry name" value="BC"/>
    <property type="match status" value="1"/>
</dbReference>
<dbReference type="PROSITE" id="PS50968">
    <property type="entry name" value="BIOTINYL_LIPOYL"/>
    <property type="match status" value="1"/>
</dbReference>
<dbReference type="PROSITE" id="PS00866">
    <property type="entry name" value="CPSASE_1"/>
    <property type="match status" value="1"/>
</dbReference>
<dbReference type="PROSITE" id="PS00867">
    <property type="entry name" value="CPSASE_2"/>
    <property type="match status" value="1"/>
</dbReference>
<dbReference type="PROSITE" id="PS50991">
    <property type="entry name" value="PYR_CT"/>
    <property type="match status" value="1"/>
</dbReference>
<keyword id="KW-0002">3D-structure</keyword>
<keyword id="KW-0067">ATP-binding</keyword>
<keyword id="KW-0092">Biotin</keyword>
<keyword id="KW-0436">Ligase</keyword>
<keyword id="KW-0464">Manganese</keyword>
<keyword id="KW-0479">Metal-binding</keyword>
<keyword id="KW-0547">Nucleotide-binding</keyword>
<keyword id="KW-0670">Pyruvate</keyword>
<accession>A0A0H3JRU9</accession>
<sequence>MKQIKKLLVANRGEIAIRIFRAAAELDISTVAIYSNEDKSSLHRYKADESYLVGSDLGPAESYLNIERIIDVAKQANVDAIHPGYGFLSENEQFARRCAEEGIKFIGPHLEHLDMFGDKVKARTTAIKADLPVIPGTDGPIKSYELAKEFAEEAGFPLMIKATSGGGGKGMRIVREESELEDAFHRAKSEAEKSFGNSEVYIERYIDNPKHIEVQVIGDEHGNIVHLFERDCSVQRRHQKVVEVAPSVGLSPTLRQRICDAAIQLMENIKYVNAGTVEFLVSGDEFFFIEVNPRVQVEHTITEMVTGIDIVKTQILVAAGADLFGEEINMPQQKDITTLGYAIQCRITTEDPLNDFMPDTGTIIAYRSSGGFGVRLDAGDGFQGAEISPYYDSLLVKLSTHAISFKQAEEKMVRSLREMRIRGVKTNIPFLINVMKNKKFTSGDYTTKFIEETPELFDIQPSLDRGTKTLEYIGNVTINGFPNVEKRPKPDYELASIPTVSSSKIASFSGTKQLLDEVGPKGVAEWVKKQDDVLLTDTTFRDAHQSLLATRVRTKDMINIASKTADVFKDGFSLEMWGGATFDVAYNFLKENPWERLERLRKAIPNVLFQMLLRASNAVGYKNYPDNVIHKFVQESAKAGIDVFRIFDSLNWVDQMKVANEAVQEAGKISEGTICYTGDILNPERSNIYTLEYYVKLAKELEREGFHILAIKDMAGLLKPKAAYELIGELKSAVDLPIHLHTHDTSGNGLLTYKQAIDAGVDIIDTAVASMSGLTSQPSANSLYYALNGFPRHLRTDIEGMESLSHYWSTVRTYYSDFESDIKSPNTEIYQHEMPGGQYSNLSQQAKSLGLGERFDEVKDMYRRVNFLFGDIVKVTPSSKVVGDMALYMVQNDLDEQSVITDGYKLDFPESVVSFFKGEIGQPVNGFNKDLQAVILKGQEALTARPGEYLEPVDFEKVRELLEEEQQGPVTEQDIISYVLYPKVYEQYIQTRNQYGNLSLLDTPTFFFGMRNGETVEIEIDKGKRLIIKLETISEPDENGNRTIYYAMNGQARRIYIKDENVHTNANVKPKADKSNPSHIGAQMPGSVTEVKVSVGETVKANQPLLITEAMKMETTIQAPFDGVIKQVTVNNGDTIATGDLLIEIEKATD</sequence>
<gene>
    <name type="primary">pycA</name>
    <name type="ordered locus">SAV1114</name>
</gene>
<name>PYC_STAAM</name>